<dbReference type="EC" id="2.3.1.-"/>
<dbReference type="EMBL" id="L12033">
    <property type="protein sequence ID" value="AAA24783.1"/>
    <property type="molecule type" value="Genomic_DNA"/>
</dbReference>
<dbReference type="PDB" id="1KHR">
    <property type="method" value="X-ray"/>
    <property type="resolution" value="2.80 A"/>
    <property type="chains" value="A/B/C/D/E/F=1-209"/>
</dbReference>
<dbReference type="PDB" id="1KK4">
    <property type="method" value="X-ray"/>
    <property type="resolution" value="2.70 A"/>
    <property type="chains" value="A/B/C/D/E/F=1-209"/>
</dbReference>
<dbReference type="PDB" id="1KK5">
    <property type="method" value="X-ray"/>
    <property type="resolution" value="2.70 A"/>
    <property type="chains" value="A/B/C/D/E/F=1-209"/>
</dbReference>
<dbReference type="PDB" id="1KK6">
    <property type="method" value="X-ray"/>
    <property type="resolution" value="2.50 A"/>
    <property type="chains" value="A/B/C=1-209"/>
</dbReference>
<dbReference type="PDB" id="1MR7">
    <property type="method" value="X-ray"/>
    <property type="resolution" value="1.80 A"/>
    <property type="chains" value="A/B/C/X/Y/Z=1-209"/>
</dbReference>
<dbReference type="PDB" id="1MR9">
    <property type="method" value="X-ray"/>
    <property type="resolution" value="3.00 A"/>
    <property type="chains" value="A/B/C/X/Y/Z=1-209"/>
</dbReference>
<dbReference type="PDB" id="1MRL">
    <property type="method" value="X-ray"/>
    <property type="resolution" value="2.80 A"/>
    <property type="chains" value="A/B/C=1-209"/>
</dbReference>
<dbReference type="PDB" id="3DHO">
    <property type="method" value="X-ray"/>
    <property type="resolution" value="1.80 A"/>
    <property type="chains" value="A/B/C/D/E/F=1-209"/>
</dbReference>
<dbReference type="PDBsum" id="1KHR"/>
<dbReference type="PDBsum" id="1KK4"/>
<dbReference type="PDBsum" id="1KK5"/>
<dbReference type="PDBsum" id="1KK6"/>
<dbReference type="PDBsum" id="1MR7"/>
<dbReference type="PDBsum" id="1MR9"/>
<dbReference type="PDBsum" id="1MRL"/>
<dbReference type="PDBsum" id="3DHO"/>
<dbReference type="SMR" id="P50870"/>
<dbReference type="DrugBank" id="DB01992">
    <property type="generic name" value="Coenzyme A"/>
</dbReference>
<dbReference type="DrugBank" id="DB01764">
    <property type="generic name" value="Dalfopristin"/>
</dbReference>
<dbReference type="DrugBank" id="DB01669">
    <property type="generic name" value="Virginiamycin M1"/>
</dbReference>
<dbReference type="CARD" id="ARO:3002843">
    <property type="molecule name" value="vatD"/>
    <property type="mechanism identifier" value="ARO:0001004"/>
    <property type="mechanism name" value="antibiotic inactivation"/>
</dbReference>
<dbReference type="KEGG" id="ag:AAA24783"/>
<dbReference type="EvolutionaryTrace" id="P50870"/>
<dbReference type="GO" id="GO:0016746">
    <property type="term" value="F:acyltransferase activity"/>
    <property type="evidence" value="ECO:0007669"/>
    <property type="project" value="UniProtKB-KW"/>
</dbReference>
<dbReference type="GO" id="GO:0046677">
    <property type="term" value="P:response to antibiotic"/>
    <property type="evidence" value="ECO:0007669"/>
    <property type="project" value="UniProtKB-KW"/>
</dbReference>
<dbReference type="CDD" id="cd03349">
    <property type="entry name" value="LbH_XAT"/>
    <property type="match status" value="1"/>
</dbReference>
<dbReference type="FunFam" id="2.160.10.10:FF:000037">
    <property type="entry name" value="Streptogramin A acetyltransferase"/>
    <property type="match status" value="1"/>
</dbReference>
<dbReference type="Gene3D" id="2.160.10.10">
    <property type="entry name" value="Hexapeptide repeat proteins"/>
    <property type="match status" value="1"/>
</dbReference>
<dbReference type="InterPro" id="IPR001451">
    <property type="entry name" value="Hexapep"/>
</dbReference>
<dbReference type="InterPro" id="IPR018357">
    <property type="entry name" value="Hexapep_transf_CS"/>
</dbReference>
<dbReference type="InterPro" id="IPR050179">
    <property type="entry name" value="Trans_hexapeptide_repeat"/>
</dbReference>
<dbReference type="InterPro" id="IPR011004">
    <property type="entry name" value="Trimer_LpxA-like_sf"/>
</dbReference>
<dbReference type="NCBIfam" id="NF000111">
    <property type="entry name" value="stregram_VatD"/>
    <property type="match status" value="1"/>
</dbReference>
<dbReference type="NCBIfam" id="NF000311">
    <property type="entry name" value="Vat_ABCDEFH"/>
    <property type="match status" value="1"/>
</dbReference>
<dbReference type="PANTHER" id="PTHR43300">
    <property type="entry name" value="ACETYLTRANSFERASE"/>
    <property type="match status" value="1"/>
</dbReference>
<dbReference type="PANTHER" id="PTHR43300:SF11">
    <property type="entry name" value="ACETYLTRANSFERASE RV3034C-RELATED"/>
    <property type="match status" value="1"/>
</dbReference>
<dbReference type="Pfam" id="PF00132">
    <property type="entry name" value="Hexapep"/>
    <property type="match status" value="1"/>
</dbReference>
<dbReference type="SUPFAM" id="SSF51161">
    <property type="entry name" value="Trimeric LpxA-like enzymes"/>
    <property type="match status" value="1"/>
</dbReference>
<dbReference type="PROSITE" id="PS00101">
    <property type="entry name" value="HEXAPEP_TRANSFERASES"/>
    <property type="match status" value="1"/>
</dbReference>
<accession>P50870</accession>
<reference key="1">
    <citation type="journal article" date="1993" name="Antimicrob. Agents Chemother.">
        <title>Identification of the satA gene encoding a streptogramin A acetyltransferase in Enterococcus faecium BM4145.</title>
        <authorList>
            <person name="Rende-Fournier R."/>
            <person name="Leclercq R."/>
            <person name="Galimand M."/>
            <person name="Duval J."/>
            <person name="Courvalin P."/>
        </authorList>
    </citation>
    <scope>NUCLEOTIDE SEQUENCE [GENOMIC DNA]</scope>
    <source>
        <strain>BM4145</strain>
    </source>
</reference>
<reference key="2">
    <citation type="journal article" date="2002" name="Biochemistry">
        <title>Crystal structure of Vat(D): an acetyltransferase that inactivates streptogramin group A antibiotics.</title>
        <authorList>
            <person name="Sugantino M."/>
            <person name="Roderick S.L."/>
        </authorList>
    </citation>
    <scope>X-RAY CRYSTALLOGRAPHY (2.7 ANGSTROMS)</scope>
</reference>
<reference key="3">
    <citation type="journal article" date="2003" name="J. Biol. Chem.">
        <title>Structural basis of Synercid (quinupristin-dalfopristin) resistance in Gram-positive bacterial pathogens.</title>
        <authorList>
            <person name="Kehoe L.E."/>
            <person name="Snidwongse J."/>
            <person name="Courvalin P."/>
            <person name="Rafferty J.B."/>
            <person name="Murray I.A."/>
        </authorList>
    </citation>
    <scope>X-RAY CRYSTALLOGRAPHY (2.8 ANGSTROMS)</scope>
    <scope>MUTAGENESIS OF HIS-82</scope>
</reference>
<feature type="chain" id="PRO_0000068663" description="Streptogramin A acetyltransferase">
    <location>
        <begin position="1"/>
        <end position="209"/>
    </location>
</feature>
<feature type="active site">
    <location>
        <position position="82"/>
    </location>
</feature>
<feature type="mutagenesis site" description="105-fold decrease in activity." evidence="1">
    <original>H</original>
    <variation>A</variation>
    <location>
        <position position="82"/>
    </location>
</feature>
<feature type="strand" evidence="3">
    <location>
        <begin position="11"/>
        <end position="13"/>
    </location>
</feature>
<feature type="strand" evidence="4">
    <location>
        <begin position="16"/>
        <end position="19"/>
    </location>
</feature>
<feature type="helix" evidence="4">
    <location>
        <begin position="20"/>
        <end position="24"/>
    </location>
</feature>
<feature type="strand" evidence="4">
    <location>
        <begin position="30"/>
        <end position="32"/>
    </location>
</feature>
<feature type="strand" evidence="4">
    <location>
        <begin position="37"/>
        <end position="39"/>
    </location>
</feature>
<feature type="strand" evidence="4">
    <location>
        <begin position="41"/>
        <end position="43"/>
    </location>
</feature>
<feature type="helix" evidence="4">
    <location>
        <begin position="46"/>
        <end position="49"/>
    </location>
</feature>
<feature type="strand" evidence="4">
    <location>
        <begin position="50"/>
        <end position="52"/>
    </location>
</feature>
<feature type="helix" evidence="4">
    <location>
        <begin position="55"/>
        <end position="57"/>
    </location>
</feature>
<feature type="strand" evidence="4">
    <location>
        <begin position="61"/>
        <end position="63"/>
    </location>
</feature>
<feature type="strand" evidence="4">
    <location>
        <begin position="74"/>
        <end position="76"/>
    </location>
</feature>
<feature type="helix" evidence="4">
    <location>
        <begin position="78"/>
        <end position="80"/>
    </location>
</feature>
<feature type="helix" evidence="4">
    <location>
        <begin position="91"/>
        <end position="94"/>
    </location>
</feature>
<feature type="helix" evidence="4">
    <location>
        <begin position="98"/>
        <end position="101"/>
    </location>
</feature>
<feature type="helix" evidence="4">
    <location>
        <begin position="105"/>
        <end position="107"/>
    </location>
</feature>
<feature type="strand" evidence="4">
    <location>
        <begin position="114"/>
        <end position="116"/>
    </location>
</feature>
<feature type="strand" evidence="4">
    <location>
        <begin position="154"/>
        <end position="157"/>
    </location>
</feature>
<feature type="turn" evidence="4">
    <location>
        <begin position="158"/>
        <end position="161"/>
    </location>
</feature>
<feature type="strand" evidence="4">
    <location>
        <begin position="162"/>
        <end position="168"/>
    </location>
</feature>
<feature type="helix" evidence="4">
    <location>
        <begin position="170"/>
        <end position="179"/>
    </location>
</feature>
<feature type="helix" evidence="4">
    <location>
        <begin position="181"/>
        <end position="183"/>
    </location>
</feature>
<feature type="helix" evidence="4">
    <location>
        <begin position="186"/>
        <end position="191"/>
    </location>
</feature>
<feature type="helix" evidence="4">
    <location>
        <begin position="193"/>
        <end position="198"/>
    </location>
</feature>
<feature type="helix" evidence="4">
    <location>
        <begin position="200"/>
        <end position="202"/>
    </location>
</feature>
<keyword id="KW-0002">3D-structure</keyword>
<keyword id="KW-0012">Acyltransferase</keyword>
<keyword id="KW-0046">Antibiotic resistance</keyword>
<keyword id="KW-0677">Repeat</keyword>
<keyword id="KW-0808">Transferase</keyword>
<gene>
    <name type="primary">vatD</name>
    <name type="synonym">satA</name>
</gene>
<evidence type="ECO:0000269" key="1">
    <source>
    </source>
</evidence>
<evidence type="ECO:0000305" key="2"/>
<evidence type="ECO:0007829" key="3">
    <source>
        <dbReference type="PDB" id="1KK4"/>
    </source>
</evidence>
<evidence type="ECO:0007829" key="4">
    <source>
        <dbReference type="PDB" id="1MR7"/>
    </source>
</evidence>
<proteinExistence type="evidence at protein level"/>
<protein>
    <recommendedName>
        <fullName>Streptogramin A acetyltransferase</fullName>
        <ecNumber>2.3.1.-</ecNumber>
    </recommendedName>
    <alternativeName>
        <fullName>Virginiamycin acetyltransferase D</fullName>
        <shortName>Vat(D)</shortName>
    </alternativeName>
</protein>
<comment type="function">
    <text>Inactivates the A compounds of streptogramin antibiotics by acetylation, thus providing resistance to these antibiotics.</text>
</comment>
<comment type="subunit">
    <text>Homohexamer.</text>
</comment>
<comment type="similarity">
    <text evidence="2">Belongs to the transferase hexapeptide repeat family.</text>
</comment>
<sequence length="209" mass="23649">MGPNPMKMYPIEGNKSVQFIKPILEKLENVEVGEYSYYDSKNGETFDKQILYHYPILNDKLKIGKFCSIGPGVTIIMNGANHRMDGSTYPFNLFGNGWEKHMPKLDQLPIKGDTIIGNDVWIGKDVVIMPGVKIGDGAIVAANSVVVKDIAPYMLAGGNPANEIKQRFDQDTINQLLDIKWWNWPIDIINENIDKILDNSIIREVIWKK</sequence>
<organism>
    <name type="scientific">Enterococcus faecium</name>
    <name type="common">Streptococcus faecium</name>
    <dbReference type="NCBI Taxonomy" id="1352"/>
    <lineage>
        <taxon>Bacteria</taxon>
        <taxon>Bacillati</taxon>
        <taxon>Bacillota</taxon>
        <taxon>Bacilli</taxon>
        <taxon>Lactobacillales</taxon>
        <taxon>Enterococcaceae</taxon>
        <taxon>Enterococcus</taxon>
    </lineage>
</organism>
<name>VATD_ENTFC</name>